<gene>
    <name evidence="1" type="primary">zapA</name>
    <name type="ordered locus">Ecok1_28450</name>
    <name type="ORF">APECO1_3618</name>
</gene>
<comment type="function">
    <text evidence="1">Activator of cell division through the inhibition of FtsZ GTPase activity, therefore promoting FtsZ assembly into bundles of protofilaments necessary for the formation of the division Z ring. It is recruited early at mid-cell but it is not essential for cell division.</text>
</comment>
<comment type="subunit">
    <text evidence="1">Homodimer. Interacts with FtsZ.</text>
</comment>
<comment type="subcellular location">
    <subcellularLocation>
        <location evidence="1">Cytoplasm</location>
    </subcellularLocation>
    <text evidence="1">Localizes at mid-cell.</text>
</comment>
<comment type="similarity">
    <text evidence="1">Belongs to the ZapA family. Type 1 subfamily.</text>
</comment>
<sequence length="109" mass="12594">MSAQPVDIQIFGRSLRVNCPPDQRDALNQAADDLNQRLQDLKERTRVTNTEQLVFIAALNISYELAQEKAKTRDYAASMEQRIRMLQQTIEQALLEQGRITEKTNQNFE</sequence>
<proteinExistence type="inferred from homology"/>
<accession>A1AF99</accession>
<protein>
    <recommendedName>
        <fullName evidence="1">Cell division protein ZapA</fullName>
    </recommendedName>
    <alternativeName>
        <fullName evidence="1">Z ring-associated protein ZapA</fullName>
    </alternativeName>
</protein>
<reference key="1">
    <citation type="journal article" date="2007" name="J. Bacteriol.">
        <title>The genome sequence of avian pathogenic Escherichia coli strain O1:K1:H7 shares strong similarities with human extraintestinal pathogenic E. coli genomes.</title>
        <authorList>
            <person name="Johnson T.J."/>
            <person name="Kariyawasam S."/>
            <person name="Wannemuehler Y."/>
            <person name="Mangiamele P."/>
            <person name="Johnson S.J."/>
            <person name="Doetkott C."/>
            <person name="Skyberg J.A."/>
            <person name="Lynne A.M."/>
            <person name="Johnson J.R."/>
            <person name="Nolan L.K."/>
        </authorList>
    </citation>
    <scope>NUCLEOTIDE SEQUENCE [LARGE SCALE GENOMIC DNA]</scope>
</reference>
<name>ZAPA_ECOK1</name>
<feature type="chain" id="PRO_0000345648" description="Cell division protein ZapA">
    <location>
        <begin position="1"/>
        <end position="109"/>
    </location>
</feature>
<feature type="coiled-coil region" evidence="1">
    <location>
        <begin position="21"/>
        <end position="99"/>
    </location>
</feature>
<keyword id="KW-0131">Cell cycle</keyword>
<keyword id="KW-0132">Cell division</keyword>
<keyword id="KW-0175">Coiled coil</keyword>
<keyword id="KW-0963">Cytoplasm</keyword>
<keyword id="KW-1185">Reference proteome</keyword>
<keyword id="KW-0717">Septation</keyword>
<organism>
    <name type="scientific">Escherichia coli O1:K1 / APEC</name>
    <dbReference type="NCBI Taxonomy" id="405955"/>
    <lineage>
        <taxon>Bacteria</taxon>
        <taxon>Pseudomonadati</taxon>
        <taxon>Pseudomonadota</taxon>
        <taxon>Gammaproteobacteria</taxon>
        <taxon>Enterobacterales</taxon>
        <taxon>Enterobacteriaceae</taxon>
        <taxon>Escherichia</taxon>
    </lineage>
</organism>
<dbReference type="EMBL" id="CP000468">
    <property type="protein sequence ID" value="ABJ02339.1"/>
    <property type="molecule type" value="Genomic_DNA"/>
</dbReference>
<dbReference type="RefSeq" id="WP_001276008.1">
    <property type="nucleotide sequence ID" value="NZ_CADILS010000010.1"/>
</dbReference>
<dbReference type="SMR" id="A1AF99"/>
<dbReference type="GeneID" id="93779091"/>
<dbReference type="KEGG" id="ecv:APECO1_3618"/>
<dbReference type="HOGENOM" id="CLU_116623_3_0_6"/>
<dbReference type="Proteomes" id="UP000008216">
    <property type="component" value="Chromosome"/>
</dbReference>
<dbReference type="GO" id="GO:0032153">
    <property type="term" value="C:cell division site"/>
    <property type="evidence" value="ECO:0007669"/>
    <property type="project" value="TreeGrafter"/>
</dbReference>
<dbReference type="GO" id="GO:0030428">
    <property type="term" value="C:cell septum"/>
    <property type="evidence" value="ECO:0007669"/>
    <property type="project" value="TreeGrafter"/>
</dbReference>
<dbReference type="GO" id="GO:0005829">
    <property type="term" value="C:cytosol"/>
    <property type="evidence" value="ECO:0007669"/>
    <property type="project" value="TreeGrafter"/>
</dbReference>
<dbReference type="GO" id="GO:0005886">
    <property type="term" value="C:plasma membrane"/>
    <property type="evidence" value="ECO:0007669"/>
    <property type="project" value="UniProtKB-UniRule"/>
</dbReference>
<dbReference type="GO" id="GO:0000917">
    <property type="term" value="P:division septum assembly"/>
    <property type="evidence" value="ECO:0007669"/>
    <property type="project" value="UniProtKB-KW"/>
</dbReference>
<dbReference type="GO" id="GO:0043093">
    <property type="term" value="P:FtsZ-dependent cytokinesis"/>
    <property type="evidence" value="ECO:0007669"/>
    <property type="project" value="TreeGrafter"/>
</dbReference>
<dbReference type="GO" id="GO:0000921">
    <property type="term" value="P:septin ring assembly"/>
    <property type="evidence" value="ECO:0007669"/>
    <property type="project" value="TreeGrafter"/>
</dbReference>
<dbReference type="FunFam" id="1.20.5.50:FF:000001">
    <property type="entry name" value="Cell division protein ZapA"/>
    <property type="match status" value="1"/>
</dbReference>
<dbReference type="FunFam" id="3.30.160.880:FF:000001">
    <property type="entry name" value="Cell division protein ZapA"/>
    <property type="match status" value="1"/>
</dbReference>
<dbReference type="Gene3D" id="1.20.5.50">
    <property type="match status" value="1"/>
</dbReference>
<dbReference type="Gene3D" id="3.30.160.880">
    <property type="entry name" value="Cell division protein ZapA protomer, N-terminal domain"/>
    <property type="match status" value="1"/>
</dbReference>
<dbReference type="HAMAP" id="MF_02012">
    <property type="entry name" value="ZapA_type1"/>
    <property type="match status" value="1"/>
</dbReference>
<dbReference type="InterPro" id="IPR007838">
    <property type="entry name" value="Cell_div_ZapA-like"/>
</dbReference>
<dbReference type="InterPro" id="IPR036192">
    <property type="entry name" value="Cell_div_ZapA-like_sf"/>
</dbReference>
<dbReference type="InterPro" id="IPR023771">
    <property type="entry name" value="Cell_div_ZapA_eubact"/>
</dbReference>
<dbReference type="InterPro" id="IPR042233">
    <property type="entry name" value="Cell_div_ZapA_N"/>
</dbReference>
<dbReference type="NCBIfam" id="NF008209">
    <property type="entry name" value="PRK10972.1"/>
    <property type="match status" value="1"/>
</dbReference>
<dbReference type="PANTHER" id="PTHR34981">
    <property type="entry name" value="CELL DIVISION PROTEIN ZAPA"/>
    <property type="match status" value="1"/>
</dbReference>
<dbReference type="PANTHER" id="PTHR34981:SF1">
    <property type="entry name" value="CELL DIVISION PROTEIN ZAPA"/>
    <property type="match status" value="1"/>
</dbReference>
<dbReference type="Pfam" id="PF05164">
    <property type="entry name" value="ZapA"/>
    <property type="match status" value="1"/>
</dbReference>
<dbReference type="SUPFAM" id="SSF102829">
    <property type="entry name" value="Cell division protein ZapA-like"/>
    <property type="match status" value="1"/>
</dbReference>
<evidence type="ECO:0000255" key="1">
    <source>
        <dbReference type="HAMAP-Rule" id="MF_02012"/>
    </source>
</evidence>